<gene>
    <name type="primary">She</name>
</gene>
<name>SHE_MOUSE</name>
<feature type="chain" id="PRO_0000246776" description="SH2 domain-containing adapter protein E">
    <location>
        <begin position="1"/>
        <end position="492"/>
    </location>
</feature>
<feature type="domain" description="SH2" evidence="1">
    <location>
        <begin position="393"/>
        <end position="488"/>
    </location>
</feature>
<feature type="region of interest" description="Disordered" evidence="2">
    <location>
        <begin position="46"/>
        <end position="193"/>
    </location>
</feature>
<feature type="region of interest" description="Disordered" evidence="2">
    <location>
        <begin position="214"/>
        <end position="236"/>
    </location>
</feature>
<feature type="region of interest" description="Disordered" evidence="2">
    <location>
        <begin position="260"/>
        <end position="332"/>
    </location>
</feature>
<feature type="region of interest" description="Disordered" evidence="2">
    <location>
        <begin position="347"/>
        <end position="384"/>
    </location>
</feature>
<feature type="compositionally biased region" description="Basic and acidic residues" evidence="2">
    <location>
        <begin position="149"/>
        <end position="158"/>
    </location>
</feature>
<feature type="compositionally biased region" description="Low complexity" evidence="2">
    <location>
        <begin position="168"/>
        <end position="184"/>
    </location>
</feature>
<feature type="compositionally biased region" description="Basic and acidic residues" evidence="2">
    <location>
        <begin position="214"/>
        <end position="227"/>
    </location>
</feature>
<feature type="compositionally biased region" description="Basic and acidic residues" evidence="2">
    <location>
        <begin position="268"/>
        <end position="285"/>
    </location>
</feature>
<feature type="compositionally biased region" description="Basic and acidic residues" evidence="2">
    <location>
        <begin position="306"/>
        <end position="332"/>
    </location>
</feature>
<feature type="compositionally biased region" description="Basic and acidic residues" evidence="2">
    <location>
        <begin position="349"/>
        <end position="361"/>
    </location>
</feature>
<feature type="compositionally biased region" description="Basic and acidic residues" evidence="2">
    <location>
        <begin position="373"/>
        <end position="383"/>
    </location>
</feature>
<feature type="modified residue" description="Phosphoserine" evidence="5">
    <location>
        <position position="103"/>
    </location>
</feature>
<feature type="sequence conflict" description="In Ref. 1; BAE34127." evidence="4" ref="1">
    <original>G</original>
    <variation>C</variation>
    <location>
        <position position="57"/>
    </location>
</feature>
<organism>
    <name type="scientific">Mus musculus</name>
    <name type="common">Mouse</name>
    <dbReference type="NCBI Taxonomy" id="10090"/>
    <lineage>
        <taxon>Eukaryota</taxon>
        <taxon>Metazoa</taxon>
        <taxon>Chordata</taxon>
        <taxon>Craniata</taxon>
        <taxon>Vertebrata</taxon>
        <taxon>Euteleostomi</taxon>
        <taxon>Mammalia</taxon>
        <taxon>Eutheria</taxon>
        <taxon>Euarchontoglires</taxon>
        <taxon>Glires</taxon>
        <taxon>Rodentia</taxon>
        <taxon>Myomorpha</taxon>
        <taxon>Muroidea</taxon>
        <taxon>Muridae</taxon>
        <taxon>Murinae</taxon>
        <taxon>Mus</taxon>
        <taxon>Mus</taxon>
    </lineage>
</organism>
<protein>
    <recommendedName>
        <fullName>SH2 domain-containing adapter protein E</fullName>
    </recommendedName>
</protein>
<accession>Q8BSD5</accession>
<accession>Q3TZT0</accession>
<sequence>MRRPPAPGAPRCLSWASSLFCSAASTLPGPLMAAKWFKEFPLTLKTASERARPGGAGGKPRKNSETGGAAPTPGKGRKNSAAELGASKASSGPPKDSRLSRDSLQGLIQAAAGKGRKNSRVTATATEEEPHRGAVTKSAGCSTYISRLIKVDTQEKNGKSAYPGGGSTSSSSSSSSSASSSPSSLGPELDKAKIMRQQDTVIILEDYADPYDAKRTKGQRDAERVGENDGYMEPYDAQQMITEIRRRGSKDPLVKALQLLDGPSEPGETVKVEATAKRRSSKDLLGKPPQLYDTPYEPSEGGQRVAEVKTRPADSRLPEEDDRPAAEYEQPWEWKREQIARALSVQFEGSDRPPGREDAGRPHHWQKTLKPTLSDHGDGEKVDPGLALEKQPWYHGSISRAEAESRLQPCKEAAYLVRNSESGNSKYSIALKTSQGCVHIIVAQTKDNKYTLNQTSAVFDSIPEVVHYYSNAKLPFKGAEHMTLLHPVHKLH</sequence>
<comment type="tissue specificity">
    <text evidence="3">Expressed in heart, brain, lung and skeletal muscle.</text>
</comment>
<proteinExistence type="evidence at protein level"/>
<reference key="1">
    <citation type="journal article" date="2005" name="Science">
        <title>The transcriptional landscape of the mammalian genome.</title>
        <authorList>
            <person name="Carninci P."/>
            <person name="Kasukawa T."/>
            <person name="Katayama S."/>
            <person name="Gough J."/>
            <person name="Frith M.C."/>
            <person name="Maeda N."/>
            <person name="Oyama R."/>
            <person name="Ravasi T."/>
            <person name="Lenhard B."/>
            <person name="Wells C."/>
            <person name="Kodzius R."/>
            <person name="Shimokawa K."/>
            <person name="Bajic V.B."/>
            <person name="Brenner S.E."/>
            <person name="Batalov S."/>
            <person name="Forrest A.R."/>
            <person name="Zavolan M."/>
            <person name="Davis M.J."/>
            <person name="Wilming L.G."/>
            <person name="Aidinis V."/>
            <person name="Allen J.E."/>
            <person name="Ambesi-Impiombato A."/>
            <person name="Apweiler R."/>
            <person name="Aturaliya R.N."/>
            <person name="Bailey T.L."/>
            <person name="Bansal M."/>
            <person name="Baxter L."/>
            <person name="Beisel K.W."/>
            <person name="Bersano T."/>
            <person name="Bono H."/>
            <person name="Chalk A.M."/>
            <person name="Chiu K.P."/>
            <person name="Choudhary V."/>
            <person name="Christoffels A."/>
            <person name="Clutterbuck D.R."/>
            <person name="Crowe M.L."/>
            <person name="Dalla E."/>
            <person name="Dalrymple B.P."/>
            <person name="de Bono B."/>
            <person name="Della Gatta G."/>
            <person name="di Bernardo D."/>
            <person name="Down T."/>
            <person name="Engstrom P."/>
            <person name="Fagiolini M."/>
            <person name="Faulkner G."/>
            <person name="Fletcher C.F."/>
            <person name="Fukushima T."/>
            <person name="Furuno M."/>
            <person name="Futaki S."/>
            <person name="Gariboldi M."/>
            <person name="Georgii-Hemming P."/>
            <person name="Gingeras T.R."/>
            <person name="Gojobori T."/>
            <person name="Green R.E."/>
            <person name="Gustincich S."/>
            <person name="Harbers M."/>
            <person name="Hayashi Y."/>
            <person name="Hensch T.K."/>
            <person name="Hirokawa N."/>
            <person name="Hill D."/>
            <person name="Huminiecki L."/>
            <person name="Iacono M."/>
            <person name="Ikeo K."/>
            <person name="Iwama A."/>
            <person name="Ishikawa T."/>
            <person name="Jakt M."/>
            <person name="Kanapin A."/>
            <person name="Katoh M."/>
            <person name="Kawasawa Y."/>
            <person name="Kelso J."/>
            <person name="Kitamura H."/>
            <person name="Kitano H."/>
            <person name="Kollias G."/>
            <person name="Krishnan S.P."/>
            <person name="Kruger A."/>
            <person name="Kummerfeld S.K."/>
            <person name="Kurochkin I.V."/>
            <person name="Lareau L.F."/>
            <person name="Lazarevic D."/>
            <person name="Lipovich L."/>
            <person name="Liu J."/>
            <person name="Liuni S."/>
            <person name="McWilliam S."/>
            <person name="Madan Babu M."/>
            <person name="Madera M."/>
            <person name="Marchionni L."/>
            <person name="Matsuda H."/>
            <person name="Matsuzawa S."/>
            <person name="Miki H."/>
            <person name="Mignone F."/>
            <person name="Miyake S."/>
            <person name="Morris K."/>
            <person name="Mottagui-Tabar S."/>
            <person name="Mulder N."/>
            <person name="Nakano N."/>
            <person name="Nakauchi H."/>
            <person name="Ng P."/>
            <person name="Nilsson R."/>
            <person name="Nishiguchi S."/>
            <person name="Nishikawa S."/>
            <person name="Nori F."/>
            <person name="Ohara O."/>
            <person name="Okazaki Y."/>
            <person name="Orlando V."/>
            <person name="Pang K.C."/>
            <person name="Pavan W.J."/>
            <person name="Pavesi G."/>
            <person name="Pesole G."/>
            <person name="Petrovsky N."/>
            <person name="Piazza S."/>
            <person name="Reed J."/>
            <person name="Reid J.F."/>
            <person name="Ring B.Z."/>
            <person name="Ringwald M."/>
            <person name="Rost B."/>
            <person name="Ruan Y."/>
            <person name="Salzberg S.L."/>
            <person name="Sandelin A."/>
            <person name="Schneider C."/>
            <person name="Schoenbach C."/>
            <person name="Sekiguchi K."/>
            <person name="Semple C.A."/>
            <person name="Seno S."/>
            <person name="Sessa L."/>
            <person name="Sheng Y."/>
            <person name="Shibata Y."/>
            <person name="Shimada H."/>
            <person name="Shimada K."/>
            <person name="Silva D."/>
            <person name="Sinclair B."/>
            <person name="Sperling S."/>
            <person name="Stupka E."/>
            <person name="Sugiura K."/>
            <person name="Sultana R."/>
            <person name="Takenaka Y."/>
            <person name="Taki K."/>
            <person name="Tammoja K."/>
            <person name="Tan S.L."/>
            <person name="Tang S."/>
            <person name="Taylor M.S."/>
            <person name="Tegner J."/>
            <person name="Teichmann S.A."/>
            <person name="Ueda H.R."/>
            <person name="van Nimwegen E."/>
            <person name="Verardo R."/>
            <person name="Wei C.L."/>
            <person name="Yagi K."/>
            <person name="Yamanishi H."/>
            <person name="Zabarovsky E."/>
            <person name="Zhu S."/>
            <person name="Zimmer A."/>
            <person name="Hide W."/>
            <person name="Bult C."/>
            <person name="Grimmond S.M."/>
            <person name="Teasdale R.D."/>
            <person name="Liu E.T."/>
            <person name="Brusic V."/>
            <person name="Quackenbush J."/>
            <person name="Wahlestedt C."/>
            <person name="Mattick J.S."/>
            <person name="Hume D.A."/>
            <person name="Kai C."/>
            <person name="Sasaki D."/>
            <person name="Tomaru Y."/>
            <person name="Fukuda S."/>
            <person name="Kanamori-Katayama M."/>
            <person name="Suzuki M."/>
            <person name="Aoki J."/>
            <person name="Arakawa T."/>
            <person name="Iida J."/>
            <person name="Imamura K."/>
            <person name="Itoh M."/>
            <person name="Kato T."/>
            <person name="Kawaji H."/>
            <person name="Kawagashira N."/>
            <person name="Kawashima T."/>
            <person name="Kojima M."/>
            <person name="Kondo S."/>
            <person name="Konno H."/>
            <person name="Nakano K."/>
            <person name="Ninomiya N."/>
            <person name="Nishio T."/>
            <person name="Okada M."/>
            <person name="Plessy C."/>
            <person name="Shibata K."/>
            <person name="Shiraki T."/>
            <person name="Suzuki S."/>
            <person name="Tagami M."/>
            <person name="Waki K."/>
            <person name="Watahiki A."/>
            <person name="Okamura-Oho Y."/>
            <person name="Suzuki H."/>
            <person name="Kawai J."/>
            <person name="Hayashizaki Y."/>
        </authorList>
    </citation>
    <scope>NUCLEOTIDE SEQUENCE [LARGE SCALE MRNA]</scope>
    <source>
        <strain>NOD</strain>
        <tissue>Embryo</tissue>
        <tissue>Spleen</tissue>
    </source>
</reference>
<reference key="2">
    <citation type="journal article" date="2004" name="Genome Res.">
        <title>The status, quality, and expansion of the NIH full-length cDNA project: the Mammalian Gene Collection (MGC).</title>
        <authorList>
            <consortium name="The MGC Project Team"/>
        </authorList>
    </citation>
    <scope>NUCLEOTIDE SEQUENCE [LARGE SCALE MRNA]</scope>
</reference>
<reference key="3">
    <citation type="journal article" date="1997" name="Oncogene">
        <title>Identification and characterization of two novel SH2 domain-containing proteins from a yeast two hybrid screen with the ABL tyrosine kinase.</title>
        <authorList>
            <person name="Oda T."/>
            <person name="Kujovich J."/>
            <person name="Reis M."/>
            <person name="Newman B."/>
            <person name="Druker B.J."/>
        </authorList>
    </citation>
    <scope>TISSUE SPECIFICITY</scope>
</reference>
<reference key="4">
    <citation type="journal article" date="2010" name="Cell">
        <title>A tissue-specific atlas of mouse protein phosphorylation and expression.</title>
        <authorList>
            <person name="Huttlin E.L."/>
            <person name="Jedrychowski M.P."/>
            <person name="Elias J.E."/>
            <person name="Goswami T."/>
            <person name="Rad R."/>
            <person name="Beausoleil S.A."/>
            <person name="Villen J."/>
            <person name="Haas W."/>
            <person name="Sowa M.E."/>
            <person name="Gygi S.P."/>
        </authorList>
    </citation>
    <scope>PHOSPHORYLATION [LARGE SCALE ANALYSIS] AT SER-103</scope>
    <scope>IDENTIFICATION BY MASS SPECTROMETRY [LARGE SCALE ANALYSIS]</scope>
    <source>
        <tissue>Brown adipose tissue</tissue>
        <tissue>Kidney</tissue>
        <tissue>Lung</tissue>
    </source>
</reference>
<keyword id="KW-0597">Phosphoprotein</keyword>
<keyword id="KW-1185">Reference proteome</keyword>
<keyword id="KW-0727">SH2 domain</keyword>
<evidence type="ECO:0000255" key="1">
    <source>
        <dbReference type="PROSITE-ProRule" id="PRU00191"/>
    </source>
</evidence>
<evidence type="ECO:0000256" key="2">
    <source>
        <dbReference type="SAM" id="MobiDB-lite"/>
    </source>
</evidence>
<evidence type="ECO:0000269" key="3">
    <source>
    </source>
</evidence>
<evidence type="ECO:0000305" key="4"/>
<evidence type="ECO:0007744" key="5">
    <source>
    </source>
</evidence>
<dbReference type="EMBL" id="AK034662">
    <property type="protein sequence ID" value="BAC28787.1"/>
    <property type="molecule type" value="mRNA"/>
</dbReference>
<dbReference type="EMBL" id="AK157580">
    <property type="protein sequence ID" value="BAE34127.1"/>
    <property type="molecule type" value="mRNA"/>
</dbReference>
<dbReference type="EMBL" id="BC109363">
    <property type="protein sequence ID" value="AAI09364.1"/>
    <property type="molecule type" value="mRNA"/>
</dbReference>
<dbReference type="CCDS" id="CCDS17518.1"/>
<dbReference type="RefSeq" id="NP_766118.3">
    <property type="nucleotide sequence ID" value="NM_172530.4"/>
</dbReference>
<dbReference type="SMR" id="Q8BSD5"/>
<dbReference type="BioGRID" id="229537">
    <property type="interactions" value="1"/>
</dbReference>
<dbReference type="FunCoup" id="Q8BSD5">
    <property type="interactions" value="117"/>
</dbReference>
<dbReference type="STRING" id="10090.ENSMUSP00000059658"/>
<dbReference type="GlyGen" id="Q8BSD5">
    <property type="glycosylation" value="1 site"/>
</dbReference>
<dbReference type="iPTMnet" id="Q8BSD5"/>
<dbReference type="PhosphoSitePlus" id="Q8BSD5"/>
<dbReference type="PaxDb" id="10090-ENSMUSP00000059658"/>
<dbReference type="PeptideAtlas" id="Q8BSD5"/>
<dbReference type="ProteomicsDB" id="261351"/>
<dbReference type="Antibodypedia" id="51057">
    <property type="antibodies" value="42 antibodies from 14 providers"/>
</dbReference>
<dbReference type="Ensembl" id="ENSMUST00000050401.6">
    <property type="protein sequence ID" value="ENSMUSP00000059658.6"/>
    <property type="gene ID" value="ENSMUSG00000046280.10"/>
</dbReference>
<dbReference type="GeneID" id="214547"/>
<dbReference type="KEGG" id="mmu:214547"/>
<dbReference type="UCSC" id="uc008qae.2">
    <property type="organism name" value="mouse"/>
</dbReference>
<dbReference type="AGR" id="MGI:1099462"/>
<dbReference type="CTD" id="126669"/>
<dbReference type="MGI" id="MGI:1099462">
    <property type="gene designation" value="She"/>
</dbReference>
<dbReference type="VEuPathDB" id="HostDB:ENSMUSG00000046280"/>
<dbReference type="eggNOG" id="ENOG502R9PR">
    <property type="taxonomic scope" value="Eukaryota"/>
</dbReference>
<dbReference type="GeneTree" id="ENSGT00940000159107"/>
<dbReference type="HOGENOM" id="CLU_029444_5_0_1"/>
<dbReference type="InParanoid" id="Q8BSD5"/>
<dbReference type="OMA" id="WFKEFPM"/>
<dbReference type="OrthoDB" id="5914531at2759"/>
<dbReference type="PhylomeDB" id="Q8BSD5"/>
<dbReference type="TreeFam" id="TF325799"/>
<dbReference type="BioGRID-ORCS" id="214547">
    <property type="hits" value="7 hits in 76 CRISPR screens"/>
</dbReference>
<dbReference type="PRO" id="PR:Q8BSD5"/>
<dbReference type="Proteomes" id="UP000000589">
    <property type="component" value="Chromosome 3"/>
</dbReference>
<dbReference type="RNAct" id="Q8BSD5">
    <property type="molecule type" value="protein"/>
</dbReference>
<dbReference type="Bgee" id="ENSMUSG00000046280">
    <property type="expression patterns" value="Expressed in brain blood vessel and 199 other cell types or tissues"/>
</dbReference>
<dbReference type="CDD" id="cd10391">
    <property type="entry name" value="SH2_SHE"/>
    <property type="match status" value="1"/>
</dbReference>
<dbReference type="FunFam" id="3.30.505.10:FF:000067">
    <property type="entry name" value="Src homology 2 domain-containing E"/>
    <property type="match status" value="1"/>
</dbReference>
<dbReference type="Gene3D" id="3.30.505.10">
    <property type="entry name" value="SH2 domain"/>
    <property type="match status" value="1"/>
</dbReference>
<dbReference type="InterPro" id="IPR000980">
    <property type="entry name" value="SH2"/>
</dbReference>
<dbReference type="InterPro" id="IPR036860">
    <property type="entry name" value="SH2_dom_sf"/>
</dbReference>
<dbReference type="InterPro" id="IPR051846">
    <property type="entry name" value="SH2_domain_adapters"/>
</dbReference>
<dbReference type="InterPro" id="IPR035042">
    <property type="entry name" value="SHE_SH2"/>
</dbReference>
<dbReference type="PANTHER" id="PTHR15127">
    <property type="entry name" value="HEAVYWEIGHT, ISOFORM A"/>
    <property type="match status" value="1"/>
</dbReference>
<dbReference type="PANTHER" id="PTHR15127:SF29">
    <property type="entry name" value="SH2 DOMAIN-CONTAINING ADAPTER PROTEIN E"/>
    <property type="match status" value="1"/>
</dbReference>
<dbReference type="Pfam" id="PF00017">
    <property type="entry name" value="SH2"/>
    <property type="match status" value="1"/>
</dbReference>
<dbReference type="PRINTS" id="PR00401">
    <property type="entry name" value="SH2DOMAIN"/>
</dbReference>
<dbReference type="SMART" id="SM00252">
    <property type="entry name" value="SH2"/>
    <property type="match status" value="1"/>
</dbReference>
<dbReference type="SUPFAM" id="SSF55550">
    <property type="entry name" value="SH2 domain"/>
    <property type="match status" value="1"/>
</dbReference>
<dbReference type="PROSITE" id="PS50001">
    <property type="entry name" value="SH2"/>
    <property type="match status" value="1"/>
</dbReference>